<reference key="1">
    <citation type="journal article" date="2007" name="Proc. Natl. Acad. Sci. U.S.A.">
        <title>The Orientia tsutsugamushi genome reveals massive proliferation of conjugative type IV secretion system and host-cell interaction genes.</title>
        <authorList>
            <person name="Cho N.-H."/>
            <person name="Kim H.-R."/>
            <person name="Lee J.-H."/>
            <person name="Kim S.-Y."/>
            <person name="Kim J."/>
            <person name="Cha S."/>
            <person name="Kim S.-Y."/>
            <person name="Darby A.C."/>
            <person name="Fuxelius H.-H."/>
            <person name="Yin J."/>
            <person name="Kim J.H."/>
            <person name="Kim J."/>
            <person name="Lee S.J."/>
            <person name="Koh Y.-S."/>
            <person name="Jang W.-J."/>
            <person name="Park K.-H."/>
            <person name="Andersson S.G.E."/>
            <person name="Choi M.-S."/>
            <person name="Kim I.-S."/>
        </authorList>
    </citation>
    <scope>NUCLEOTIDE SEQUENCE [LARGE SCALE GENOMIC DNA]</scope>
    <source>
        <strain>Boryong</strain>
    </source>
</reference>
<accession>A5CCS8</accession>
<organism>
    <name type="scientific">Orientia tsutsugamushi (strain Boryong)</name>
    <name type="common">Rickettsia tsutsugamushi</name>
    <dbReference type="NCBI Taxonomy" id="357244"/>
    <lineage>
        <taxon>Bacteria</taxon>
        <taxon>Pseudomonadati</taxon>
        <taxon>Pseudomonadota</taxon>
        <taxon>Alphaproteobacteria</taxon>
        <taxon>Rickettsiales</taxon>
        <taxon>Rickettsiaceae</taxon>
        <taxon>Rickettsieae</taxon>
        <taxon>Orientia</taxon>
    </lineage>
</organism>
<gene>
    <name evidence="1" type="primary">prfA</name>
    <name type="ordered locus">OTBS_0456</name>
</gene>
<name>RF1_ORITB</name>
<protein>
    <recommendedName>
        <fullName evidence="1">Peptide chain release factor 1</fullName>
        <shortName evidence="1">RF-1</shortName>
    </recommendedName>
</protein>
<sequence length="359" mass="40572">MSFTVHLNKILQKYQDLEADLNGGKLDNKELALISKEYSNLKPIIEKLNRYLKAHENIKYLQQVIDTEQDLELKSIAEVELYDTLNYLPKLEEEVKISLLPKESDDHKNAIIEVRAGTGGDEAALFAASLFQMYNKYAERKKWKFELLSISDTEIGGCKEASALISGNGVFANLKFESGVHRVQRIPKTESNGRIHTSAATVVVLPEAEEVDVKIDAKDLKIDTYRASGAGGQHVNTTDSAVRITHIPTGVVVSQQDEKSQHKNKAKAMKILYARLYDLEKQKSKQEQAISRKVQVGTGDRSERIRTYNYPQGRVTDHRINLTLYKIEEIIQEGKLDEIINNLISENEAKKIADSNIQF</sequence>
<proteinExistence type="inferred from homology"/>
<keyword id="KW-0963">Cytoplasm</keyword>
<keyword id="KW-0488">Methylation</keyword>
<keyword id="KW-0648">Protein biosynthesis</keyword>
<keyword id="KW-1185">Reference proteome</keyword>
<comment type="function">
    <text evidence="1">Peptide chain release factor 1 directs the termination of translation in response to the peptide chain termination codons UAG and UAA.</text>
</comment>
<comment type="subcellular location">
    <subcellularLocation>
        <location evidence="1">Cytoplasm</location>
    </subcellularLocation>
</comment>
<comment type="PTM">
    <text evidence="1">Methylated by PrmC. Methylation increases the termination efficiency of RF1.</text>
</comment>
<comment type="similarity">
    <text evidence="1">Belongs to the prokaryotic/mitochondrial release factor family.</text>
</comment>
<dbReference type="EMBL" id="AM494475">
    <property type="protein sequence ID" value="CAM79522.1"/>
    <property type="molecule type" value="Genomic_DNA"/>
</dbReference>
<dbReference type="RefSeq" id="WP_011944495.1">
    <property type="nucleotide sequence ID" value="NC_009488.1"/>
</dbReference>
<dbReference type="SMR" id="A5CCS8"/>
<dbReference type="KEGG" id="ots:OTBS_0456"/>
<dbReference type="eggNOG" id="COG0216">
    <property type="taxonomic scope" value="Bacteria"/>
</dbReference>
<dbReference type="HOGENOM" id="CLU_036856_0_1_5"/>
<dbReference type="Proteomes" id="UP000001565">
    <property type="component" value="Chromosome"/>
</dbReference>
<dbReference type="GO" id="GO:0005737">
    <property type="term" value="C:cytoplasm"/>
    <property type="evidence" value="ECO:0007669"/>
    <property type="project" value="UniProtKB-SubCell"/>
</dbReference>
<dbReference type="GO" id="GO:0016149">
    <property type="term" value="F:translation release factor activity, codon specific"/>
    <property type="evidence" value="ECO:0007669"/>
    <property type="project" value="UniProtKB-UniRule"/>
</dbReference>
<dbReference type="FunFam" id="3.30.160.20:FF:000004">
    <property type="entry name" value="Peptide chain release factor 1"/>
    <property type="match status" value="1"/>
</dbReference>
<dbReference type="FunFam" id="3.30.70.1660:FF:000002">
    <property type="entry name" value="Peptide chain release factor 1"/>
    <property type="match status" value="1"/>
</dbReference>
<dbReference type="FunFam" id="3.30.70.1660:FF:000004">
    <property type="entry name" value="Peptide chain release factor 1"/>
    <property type="match status" value="1"/>
</dbReference>
<dbReference type="Gene3D" id="3.30.160.20">
    <property type="match status" value="1"/>
</dbReference>
<dbReference type="Gene3D" id="3.30.70.1660">
    <property type="match status" value="1"/>
</dbReference>
<dbReference type="Gene3D" id="6.10.140.1950">
    <property type="match status" value="1"/>
</dbReference>
<dbReference type="HAMAP" id="MF_00093">
    <property type="entry name" value="Rel_fac_1"/>
    <property type="match status" value="1"/>
</dbReference>
<dbReference type="InterPro" id="IPR005139">
    <property type="entry name" value="PCRF"/>
</dbReference>
<dbReference type="InterPro" id="IPR000352">
    <property type="entry name" value="Pep_chain_release_fac_I"/>
</dbReference>
<dbReference type="InterPro" id="IPR045853">
    <property type="entry name" value="Pep_chain_release_fac_I_sf"/>
</dbReference>
<dbReference type="InterPro" id="IPR050057">
    <property type="entry name" value="Prokaryotic/Mito_RF"/>
</dbReference>
<dbReference type="InterPro" id="IPR004373">
    <property type="entry name" value="RF-1"/>
</dbReference>
<dbReference type="NCBIfam" id="TIGR00019">
    <property type="entry name" value="prfA"/>
    <property type="match status" value="1"/>
</dbReference>
<dbReference type="NCBIfam" id="NF001859">
    <property type="entry name" value="PRK00591.1"/>
    <property type="match status" value="1"/>
</dbReference>
<dbReference type="PANTHER" id="PTHR43804">
    <property type="entry name" value="LD18447P"/>
    <property type="match status" value="1"/>
</dbReference>
<dbReference type="PANTHER" id="PTHR43804:SF7">
    <property type="entry name" value="LD18447P"/>
    <property type="match status" value="1"/>
</dbReference>
<dbReference type="Pfam" id="PF03462">
    <property type="entry name" value="PCRF"/>
    <property type="match status" value="1"/>
</dbReference>
<dbReference type="Pfam" id="PF00472">
    <property type="entry name" value="RF-1"/>
    <property type="match status" value="1"/>
</dbReference>
<dbReference type="SMART" id="SM00937">
    <property type="entry name" value="PCRF"/>
    <property type="match status" value="1"/>
</dbReference>
<dbReference type="SUPFAM" id="SSF75620">
    <property type="entry name" value="Release factor"/>
    <property type="match status" value="1"/>
</dbReference>
<dbReference type="PROSITE" id="PS00745">
    <property type="entry name" value="RF_PROK_I"/>
    <property type="match status" value="1"/>
</dbReference>
<evidence type="ECO:0000255" key="1">
    <source>
        <dbReference type="HAMAP-Rule" id="MF_00093"/>
    </source>
</evidence>
<feature type="chain" id="PRO_1000004925" description="Peptide chain release factor 1">
    <location>
        <begin position="1"/>
        <end position="359"/>
    </location>
</feature>
<feature type="modified residue" description="N5-methylglutamine" evidence="1">
    <location>
        <position position="233"/>
    </location>
</feature>